<proteinExistence type="inferred from homology"/>
<name>RL14_SHIFL</name>
<sequence length="123" mass="13541">MIQEQTMLNVADNSGARRVMCIKVLGGSHRRYAGVGDIIKITIKEAIPRGKVKKGDVLKAVVVRTKKGVRRPDGSVIRFDGNACVLLNNNSEQPIGTRIFGPVTRELRSEKFMKIISLAPEVL</sequence>
<comment type="function">
    <text evidence="1">Binds to 23S rRNA. Forms part of two intersubunit bridges in the 70S ribosome.</text>
</comment>
<comment type="subunit">
    <text evidence="1">Part of the 50S ribosomal subunit. Forms a cluster with proteins L3 and L19. In the 70S ribosome, L14 and L19 interact and together make contacts with the 16S rRNA in bridges B5 and B8.</text>
</comment>
<comment type="similarity">
    <text evidence="1">Belongs to the universal ribosomal protein uL14 family.</text>
</comment>
<organism>
    <name type="scientific">Shigella flexneri</name>
    <dbReference type="NCBI Taxonomy" id="623"/>
    <lineage>
        <taxon>Bacteria</taxon>
        <taxon>Pseudomonadati</taxon>
        <taxon>Pseudomonadota</taxon>
        <taxon>Gammaproteobacteria</taxon>
        <taxon>Enterobacterales</taxon>
        <taxon>Enterobacteriaceae</taxon>
        <taxon>Shigella</taxon>
    </lineage>
</organism>
<gene>
    <name evidence="1" type="primary">rplN</name>
    <name type="ordered locus">SF3342</name>
    <name type="ordered locus">S4420</name>
</gene>
<evidence type="ECO:0000255" key="1">
    <source>
        <dbReference type="HAMAP-Rule" id="MF_01367"/>
    </source>
</evidence>
<evidence type="ECO:0000305" key="2"/>
<accession>P0ADY6</accession>
<accession>P02411</accession>
<keyword id="KW-1185">Reference proteome</keyword>
<keyword id="KW-0687">Ribonucleoprotein</keyword>
<keyword id="KW-0689">Ribosomal protein</keyword>
<keyword id="KW-0694">RNA-binding</keyword>
<keyword id="KW-0699">rRNA-binding</keyword>
<dbReference type="EMBL" id="AE005674">
    <property type="protein sequence ID" value="AAN44805.1"/>
    <property type="molecule type" value="Genomic_DNA"/>
</dbReference>
<dbReference type="EMBL" id="AE014073">
    <property type="protein sequence ID" value="AAP19371.1"/>
    <property type="molecule type" value="Genomic_DNA"/>
</dbReference>
<dbReference type="RefSeq" id="NP_709098.1">
    <property type="nucleotide sequence ID" value="NC_004337.2"/>
</dbReference>
<dbReference type="RefSeq" id="WP_000613955.1">
    <property type="nucleotide sequence ID" value="NZ_WPGW01000088.1"/>
</dbReference>
<dbReference type="SMR" id="P0ADY6"/>
<dbReference type="STRING" id="198214.SF3342"/>
<dbReference type="PaxDb" id="198214-SF3342"/>
<dbReference type="GeneID" id="1027016"/>
<dbReference type="GeneID" id="93778677"/>
<dbReference type="KEGG" id="sfl:SF3342"/>
<dbReference type="KEGG" id="sfx:S4420"/>
<dbReference type="PATRIC" id="fig|198214.7.peg.3951"/>
<dbReference type="HOGENOM" id="CLU_095071_2_1_6"/>
<dbReference type="Proteomes" id="UP000001006">
    <property type="component" value="Chromosome"/>
</dbReference>
<dbReference type="Proteomes" id="UP000002673">
    <property type="component" value="Chromosome"/>
</dbReference>
<dbReference type="GO" id="GO:0022625">
    <property type="term" value="C:cytosolic large ribosomal subunit"/>
    <property type="evidence" value="ECO:0007669"/>
    <property type="project" value="TreeGrafter"/>
</dbReference>
<dbReference type="GO" id="GO:0070180">
    <property type="term" value="F:large ribosomal subunit rRNA binding"/>
    <property type="evidence" value="ECO:0007669"/>
    <property type="project" value="TreeGrafter"/>
</dbReference>
<dbReference type="GO" id="GO:0003735">
    <property type="term" value="F:structural constituent of ribosome"/>
    <property type="evidence" value="ECO:0007669"/>
    <property type="project" value="InterPro"/>
</dbReference>
<dbReference type="GO" id="GO:0006412">
    <property type="term" value="P:translation"/>
    <property type="evidence" value="ECO:0007669"/>
    <property type="project" value="UniProtKB-UniRule"/>
</dbReference>
<dbReference type="CDD" id="cd00337">
    <property type="entry name" value="Ribosomal_uL14"/>
    <property type="match status" value="1"/>
</dbReference>
<dbReference type="FunFam" id="2.40.150.20:FF:000001">
    <property type="entry name" value="50S ribosomal protein L14"/>
    <property type="match status" value="1"/>
</dbReference>
<dbReference type="Gene3D" id="2.40.150.20">
    <property type="entry name" value="Ribosomal protein L14"/>
    <property type="match status" value="1"/>
</dbReference>
<dbReference type="HAMAP" id="MF_01367">
    <property type="entry name" value="Ribosomal_uL14"/>
    <property type="match status" value="1"/>
</dbReference>
<dbReference type="InterPro" id="IPR000218">
    <property type="entry name" value="Ribosomal_uL14"/>
</dbReference>
<dbReference type="InterPro" id="IPR005745">
    <property type="entry name" value="Ribosomal_uL14_bac-type"/>
</dbReference>
<dbReference type="InterPro" id="IPR019972">
    <property type="entry name" value="Ribosomal_uL14_CS"/>
</dbReference>
<dbReference type="InterPro" id="IPR036853">
    <property type="entry name" value="Ribosomal_uL14_sf"/>
</dbReference>
<dbReference type="NCBIfam" id="TIGR01067">
    <property type="entry name" value="rplN_bact"/>
    <property type="match status" value="1"/>
</dbReference>
<dbReference type="PANTHER" id="PTHR11761">
    <property type="entry name" value="50S/60S RIBOSOMAL PROTEIN L14/L23"/>
    <property type="match status" value="1"/>
</dbReference>
<dbReference type="PANTHER" id="PTHR11761:SF3">
    <property type="entry name" value="LARGE RIBOSOMAL SUBUNIT PROTEIN UL14M"/>
    <property type="match status" value="1"/>
</dbReference>
<dbReference type="Pfam" id="PF00238">
    <property type="entry name" value="Ribosomal_L14"/>
    <property type="match status" value="1"/>
</dbReference>
<dbReference type="SMART" id="SM01374">
    <property type="entry name" value="Ribosomal_L14"/>
    <property type="match status" value="1"/>
</dbReference>
<dbReference type="SUPFAM" id="SSF50193">
    <property type="entry name" value="Ribosomal protein L14"/>
    <property type="match status" value="1"/>
</dbReference>
<dbReference type="PROSITE" id="PS00049">
    <property type="entry name" value="RIBOSOMAL_L14"/>
    <property type="match status" value="1"/>
</dbReference>
<feature type="chain" id="PRO_0000128558" description="Large ribosomal subunit protein uL14">
    <location>
        <begin position="1"/>
        <end position="123"/>
    </location>
</feature>
<protein>
    <recommendedName>
        <fullName evidence="1">Large ribosomal subunit protein uL14</fullName>
    </recommendedName>
    <alternativeName>
        <fullName evidence="2">50S ribosomal protein L14</fullName>
    </alternativeName>
</protein>
<reference key="1">
    <citation type="journal article" date="2002" name="Nucleic Acids Res.">
        <title>Genome sequence of Shigella flexneri 2a: insights into pathogenicity through comparison with genomes of Escherichia coli K12 and O157.</title>
        <authorList>
            <person name="Jin Q."/>
            <person name="Yuan Z."/>
            <person name="Xu J."/>
            <person name="Wang Y."/>
            <person name="Shen Y."/>
            <person name="Lu W."/>
            <person name="Wang J."/>
            <person name="Liu H."/>
            <person name="Yang J."/>
            <person name="Yang F."/>
            <person name="Zhang X."/>
            <person name="Zhang J."/>
            <person name="Yang G."/>
            <person name="Wu H."/>
            <person name="Qu D."/>
            <person name="Dong J."/>
            <person name="Sun L."/>
            <person name="Xue Y."/>
            <person name="Zhao A."/>
            <person name="Gao Y."/>
            <person name="Zhu J."/>
            <person name="Kan B."/>
            <person name="Ding K."/>
            <person name="Chen S."/>
            <person name="Cheng H."/>
            <person name="Yao Z."/>
            <person name="He B."/>
            <person name="Chen R."/>
            <person name="Ma D."/>
            <person name="Qiang B."/>
            <person name="Wen Y."/>
            <person name="Hou Y."/>
            <person name="Yu J."/>
        </authorList>
    </citation>
    <scope>NUCLEOTIDE SEQUENCE [LARGE SCALE GENOMIC DNA]</scope>
    <source>
        <strain>301 / Serotype 2a</strain>
    </source>
</reference>
<reference key="2">
    <citation type="journal article" date="2003" name="Infect. Immun.">
        <title>Complete genome sequence and comparative genomics of Shigella flexneri serotype 2a strain 2457T.</title>
        <authorList>
            <person name="Wei J."/>
            <person name="Goldberg M.B."/>
            <person name="Burland V."/>
            <person name="Venkatesan M.M."/>
            <person name="Deng W."/>
            <person name="Fournier G."/>
            <person name="Mayhew G.F."/>
            <person name="Plunkett G. III"/>
            <person name="Rose D.J."/>
            <person name="Darling A."/>
            <person name="Mau B."/>
            <person name="Perna N.T."/>
            <person name="Payne S.M."/>
            <person name="Runyen-Janecky L.J."/>
            <person name="Zhou S."/>
            <person name="Schwartz D.C."/>
            <person name="Blattner F.R."/>
        </authorList>
    </citation>
    <scope>NUCLEOTIDE SEQUENCE [LARGE SCALE GENOMIC DNA]</scope>
    <source>
        <strain>ATCC 700930 / 2457T / Serotype 2a</strain>
    </source>
</reference>